<proteinExistence type="inferred from homology"/>
<keyword id="KW-1185">Reference proteome</keyword>
<keyword id="KW-0678">Repressor</keyword>
<keyword id="KW-0687">Ribonucleoprotein</keyword>
<keyword id="KW-0689">Ribosomal protein</keyword>
<keyword id="KW-0694">RNA-binding</keyword>
<keyword id="KW-0699">rRNA-binding</keyword>
<keyword id="KW-0810">Translation regulation</keyword>
<keyword id="KW-0820">tRNA-binding</keyword>
<organism>
    <name type="scientific">Mycoplasmoides gallisepticum (strain R(low / passage 15 / clone 2))</name>
    <name type="common">Mycoplasma gallisepticum</name>
    <dbReference type="NCBI Taxonomy" id="710127"/>
    <lineage>
        <taxon>Bacteria</taxon>
        <taxon>Bacillati</taxon>
        <taxon>Mycoplasmatota</taxon>
        <taxon>Mycoplasmoidales</taxon>
        <taxon>Mycoplasmoidaceae</taxon>
        <taxon>Mycoplasmoides</taxon>
    </lineage>
</organism>
<feature type="chain" id="PRO_0000125686" description="Large ribosomal subunit protein uL1">
    <location>
        <begin position="1"/>
        <end position="226"/>
    </location>
</feature>
<gene>
    <name evidence="1" type="primary">rplA</name>
    <name evidence="1" type="synonym">rpl1</name>
    <name type="ordered locus">MYCGA6650</name>
    <name type="ORF">MGA_0504</name>
</gene>
<evidence type="ECO:0000255" key="1">
    <source>
        <dbReference type="HAMAP-Rule" id="MF_01318"/>
    </source>
</evidence>
<evidence type="ECO:0000305" key="2"/>
<protein>
    <recommendedName>
        <fullName evidence="1">Large ribosomal subunit protein uL1</fullName>
    </recommendedName>
    <alternativeName>
        <fullName evidence="2">50S ribosomal protein L1</fullName>
    </alternativeName>
</protein>
<reference key="1">
    <citation type="submission" date="2002-03" db="EMBL/GenBank/DDBJ databases">
        <authorList>
            <person name="Skamrov A.V."/>
            <person name="Gol'dman M.A."/>
            <person name="Feoktistova E.S."/>
            <person name="Bibilashvili R.S."/>
        </authorList>
    </citation>
    <scope>NUCLEOTIDE SEQUENCE [GENOMIC DNA]</scope>
    <source>
        <strain>A5969Var.B</strain>
    </source>
</reference>
<reference key="2">
    <citation type="journal article" date="2003" name="Microbiology">
        <title>The complete genome sequence of the avian pathogen Mycoplasma gallisepticum strain R(low).</title>
        <authorList>
            <person name="Papazisi L."/>
            <person name="Gorton T.S."/>
            <person name="Kutish G."/>
            <person name="Markham P.F."/>
            <person name="Browning G.F."/>
            <person name="Nguyen D.K."/>
            <person name="Swartzell S."/>
            <person name="Madan A."/>
            <person name="Mahairas G."/>
            <person name="Geary S.J."/>
        </authorList>
    </citation>
    <scope>NUCLEOTIDE SEQUENCE [LARGE SCALE GENOMIC DNA]</scope>
    <source>
        <strain>R(low / passage 15 / clone 2)</strain>
    </source>
</reference>
<comment type="function">
    <text evidence="1">Binds directly to 23S rRNA. The L1 stalk is quite mobile in the ribosome, and is involved in E site tRNA release.</text>
</comment>
<comment type="function">
    <text evidence="1">Protein L1 is also a translational repressor protein, it controls the translation of the L11 operon by binding to its mRNA.</text>
</comment>
<comment type="subunit">
    <text evidence="1">Part of the 50S ribosomal subunit.</text>
</comment>
<comment type="similarity">
    <text evidence="1">Belongs to the universal ribosomal protein uL1 family.</text>
</comment>
<name>RL1_MYCGA</name>
<dbReference type="EMBL" id="AY081866">
    <property type="protein sequence ID" value="AAL91133.1"/>
    <property type="molecule type" value="Genomic_DNA"/>
</dbReference>
<dbReference type="EMBL" id="AE015450">
    <property type="protein sequence ID" value="AAP57015.1"/>
    <property type="molecule type" value="Genomic_DNA"/>
</dbReference>
<dbReference type="RefSeq" id="WP_011113926.1">
    <property type="nucleotide sequence ID" value="NC_004829.2"/>
</dbReference>
<dbReference type="SMR" id="Q8RLD8"/>
<dbReference type="KEGG" id="mga:MGA_0504"/>
<dbReference type="HOGENOM" id="CLU_062853_0_0_14"/>
<dbReference type="OrthoDB" id="9803740at2"/>
<dbReference type="Proteomes" id="UP000001418">
    <property type="component" value="Chromosome"/>
</dbReference>
<dbReference type="GO" id="GO:0015934">
    <property type="term" value="C:large ribosomal subunit"/>
    <property type="evidence" value="ECO:0007669"/>
    <property type="project" value="InterPro"/>
</dbReference>
<dbReference type="GO" id="GO:0019843">
    <property type="term" value="F:rRNA binding"/>
    <property type="evidence" value="ECO:0007669"/>
    <property type="project" value="UniProtKB-UniRule"/>
</dbReference>
<dbReference type="GO" id="GO:0003735">
    <property type="term" value="F:structural constituent of ribosome"/>
    <property type="evidence" value="ECO:0007669"/>
    <property type="project" value="InterPro"/>
</dbReference>
<dbReference type="GO" id="GO:0000049">
    <property type="term" value="F:tRNA binding"/>
    <property type="evidence" value="ECO:0007669"/>
    <property type="project" value="UniProtKB-KW"/>
</dbReference>
<dbReference type="GO" id="GO:0006417">
    <property type="term" value="P:regulation of translation"/>
    <property type="evidence" value="ECO:0007669"/>
    <property type="project" value="UniProtKB-KW"/>
</dbReference>
<dbReference type="GO" id="GO:0006412">
    <property type="term" value="P:translation"/>
    <property type="evidence" value="ECO:0007669"/>
    <property type="project" value="UniProtKB-UniRule"/>
</dbReference>
<dbReference type="CDD" id="cd00403">
    <property type="entry name" value="Ribosomal_L1"/>
    <property type="match status" value="1"/>
</dbReference>
<dbReference type="FunFam" id="3.40.50.790:FF:000001">
    <property type="entry name" value="50S ribosomal protein L1"/>
    <property type="match status" value="1"/>
</dbReference>
<dbReference type="Gene3D" id="3.30.190.20">
    <property type="match status" value="1"/>
</dbReference>
<dbReference type="Gene3D" id="3.40.50.790">
    <property type="match status" value="1"/>
</dbReference>
<dbReference type="HAMAP" id="MF_01318_B">
    <property type="entry name" value="Ribosomal_uL1_B"/>
    <property type="match status" value="1"/>
</dbReference>
<dbReference type="InterPro" id="IPR005878">
    <property type="entry name" value="Ribosom_uL1_bac-type"/>
</dbReference>
<dbReference type="InterPro" id="IPR002143">
    <property type="entry name" value="Ribosomal_uL1"/>
</dbReference>
<dbReference type="InterPro" id="IPR023674">
    <property type="entry name" value="Ribosomal_uL1-like"/>
</dbReference>
<dbReference type="InterPro" id="IPR028364">
    <property type="entry name" value="Ribosomal_uL1/biogenesis"/>
</dbReference>
<dbReference type="InterPro" id="IPR016095">
    <property type="entry name" value="Ribosomal_uL1_3-a/b-sand"/>
</dbReference>
<dbReference type="InterPro" id="IPR023673">
    <property type="entry name" value="Ribosomal_uL1_CS"/>
</dbReference>
<dbReference type="NCBIfam" id="TIGR01169">
    <property type="entry name" value="rplA_bact"/>
    <property type="match status" value="1"/>
</dbReference>
<dbReference type="PANTHER" id="PTHR36427">
    <property type="entry name" value="54S RIBOSOMAL PROTEIN L1, MITOCHONDRIAL"/>
    <property type="match status" value="1"/>
</dbReference>
<dbReference type="PANTHER" id="PTHR36427:SF3">
    <property type="entry name" value="LARGE RIBOSOMAL SUBUNIT PROTEIN UL1M"/>
    <property type="match status" value="1"/>
</dbReference>
<dbReference type="Pfam" id="PF00687">
    <property type="entry name" value="Ribosomal_L1"/>
    <property type="match status" value="1"/>
</dbReference>
<dbReference type="PIRSF" id="PIRSF002155">
    <property type="entry name" value="Ribosomal_L1"/>
    <property type="match status" value="1"/>
</dbReference>
<dbReference type="SUPFAM" id="SSF56808">
    <property type="entry name" value="Ribosomal protein L1"/>
    <property type="match status" value="1"/>
</dbReference>
<dbReference type="PROSITE" id="PS01199">
    <property type="entry name" value="RIBOSOMAL_L1"/>
    <property type="match status" value="1"/>
</dbReference>
<accession>Q8RLD8</accession>
<accession>Q7C3D0</accession>
<sequence length="226" mass="24686">MAKKLTKKTKAALGSFDPKQIYDLDKAIEIAKKTATTKFESSIDIAIKLNLDTTKADQQLRGAISLPHNVSKPIRILAITDQQAEAKQAGADFVGEIDKINEIKAGWMDFDVIITNPKFMIELGKLGKILGPKGLMPNPKTGTVTQDIATAITEYRKGKKEYRTDTFGNIHMTVGKQSTDTNKIVENANALIDLIKSRRPSAVKGVYIQNISVSSTMGPGVKVKIN</sequence>